<sequence>MFLLLIILQALAVAIAQSQGDHKIIGGYRCVRNSQPWQVALQAGPGHRFLCGGVLLSDQWVITAAHCARPILHVALGKHNIRRWEATQQVVRVARQVPHPQYQPQAHDNDLMLLKLQKKVRLGRAVKTISVASSCASPGTPCRVSGWGTIASPIARYPTALQCVNVNIMSEQACHRAYPGIITSGMVCAGVPEGGKDSCQGDSGGPLVCGGQLQGLVSWGMERCAMPGYPGVYANLCNYHSWIQRTMQSN</sequence>
<feature type="signal peptide" evidence="1">
    <location>
        <begin position="1"/>
        <end position="18"/>
    </location>
</feature>
<feature type="propeptide" id="PRO_0000378340" description="Activation peptide" evidence="1">
    <location>
        <begin position="19"/>
        <end position="23"/>
    </location>
</feature>
<feature type="chain" id="PRO_0000378341" description="Kallikrein-14">
    <location>
        <begin position="24"/>
        <end position="250"/>
    </location>
</feature>
<feature type="domain" description="Peptidase S1" evidence="2">
    <location>
        <begin position="24"/>
        <end position="248"/>
    </location>
</feature>
<feature type="active site" description="Charge relay system" evidence="1">
    <location>
        <position position="66"/>
    </location>
</feature>
<feature type="active site" description="Charge relay system" evidence="1">
    <location>
        <position position="110"/>
    </location>
</feature>
<feature type="active site" description="Charge relay system" evidence="1">
    <location>
        <position position="203"/>
    </location>
</feature>
<feature type="disulfide bond" evidence="2">
    <location>
        <begin position="51"/>
        <end position="67"/>
    </location>
</feature>
<feature type="disulfide bond" evidence="2">
    <location>
        <begin position="142"/>
        <end position="209"/>
    </location>
</feature>
<feature type="disulfide bond" evidence="2">
    <location>
        <begin position="174"/>
        <end position="188"/>
    </location>
</feature>
<feature type="disulfide bond" evidence="2">
    <location>
        <begin position="199"/>
        <end position="224"/>
    </location>
</feature>
<dbReference type="EC" id="3.4.21.-"/>
<dbReference type="EMBL" id="AY152433">
    <property type="protein sequence ID" value="AAN78421.1"/>
    <property type="molecule type" value="Genomic_DNA"/>
</dbReference>
<dbReference type="EMBL" id="BC128019">
    <property type="protein sequence ID" value="AAI28020.1"/>
    <property type="molecule type" value="mRNA"/>
</dbReference>
<dbReference type="CCDS" id="CCDS21180.1"/>
<dbReference type="RefSeq" id="NP_777355.1">
    <property type="nucleotide sequence ID" value="NM_174866.4"/>
</dbReference>
<dbReference type="RefSeq" id="XP_006541018.1">
    <property type="nucleotide sequence ID" value="XM_006540955.3"/>
</dbReference>
<dbReference type="SMR" id="Q8CGR5"/>
<dbReference type="BioGRID" id="235057">
    <property type="interactions" value="1"/>
</dbReference>
<dbReference type="FunCoup" id="Q8CGR5">
    <property type="interactions" value="170"/>
</dbReference>
<dbReference type="STRING" id="10090.ENSMUSP00000056935"/>
<dbReference type="MEROPS" id="S01.029"/>
<dbReference type="PhosphoSitePlus" id="Q8CGR5"/>
<dbReference type="PaxDb" id="10090-ENSMUSP00000056935"/>
<dbReference type="ProteomicsDB" id="263659"/>
<dbReference type="Antibodypedia" id="18986">
    <property type="antibodies" value="207 antibodies from 27 providers"/>
</dbReference>
<dbReference type="DNASU" id="317653"/>
<dbReference type="Ensembl" id="ENSMUST00000056329.7">
    <property type="protein sequence ID" value="ENSMUSP00000056935.7"/>
    <property type="gene ID" value="ENSMUSG00000044737.7"/>
</dbReference>
<dbReference type="GeneID" id="317653"/>
<dbReference type="KEGG" id="mmu:317653"/>
<dbReference type="UCSC" id="uc009gni.2">
    <property type="organism name" value="mouse"/>
</dbReference>
<dbReference type="AGR" id="MGI:2447564"/>
<dbReference type="CTD" id="43847"/>
<dbReference type="MGI" id="MGI:2447564">
    <property type="gene designation" value="Klk14"/>
</dbReference>
<dbReference type="VEuPathDB" id="HostDB:ENSMUSG00000044737"/>
<dbReference type="eggNOG" id="KOG3627">
    <property type="taxonomic scope" value="Eukaryota"/>
</dbReference>
<dbReference type="GeneTree" id="ENSGT01020000230389"/>
<dbReference type="HOGENOM" id="CLU_006842_7_0_1"/>
<dbReference type="InParanoid" id="Q8CGR5"/>
<dbReference type="OMA" id="CKYQTWI"/>
<dbReference type="OrthoDB" id="10012881at2759"/>
<dbReference type="PhylomeDB" id="Q8CGR5"/>
<dbReference type="TreeFam" id="TF331065"/>
<dbReference type="Reactome" id="R-MMU-6809371">
    <property type="pathway name" value="Formation of the cornified envelope"/>
</dbReference>
<dbReference type="BioGRID-ORCS" id="317653">
    <property type="hits" value="3 hits in 77 CRISPR screens"/>
</dbReference>
<dbReference type="ChiTaRS" id="Klk14">
    <property type="organism name" value="mouse"/>
</dbReference>
<dbReference type="PRO" id="PR:Q8CGR5"/>
<dbReference type="Proteomes" id="UP000000589">
    <property type="component" value="Chromosome 7"/>
</dbReference>
<dbReference type="RNAct" id="Q8CGR5">
    <property type="molecule type" value="protein"/>
</dbReference>
<dbReference type="Bgee" id="ENSMUSG00000044737">
    <property type="expression patterns" value="Expressed in esophagus and 24 other cell types or tissues"/>
</dbReference>
<dbReference type="ExpressionAtlas" id="Q8CGR5">
    <property type="expression patterns" value="baseline and differential"/>
</dbReference>
<dbReference type="GO" id="GO:0005615">
    <property type="term" value="C:extracellular space"/>
    <property type="evidence" value="ECO:0000250"/>
    <property type="project" value="UniProtKB"/>
</dbReference>
<dbReference type="GO" id="GO:0004252">
    <property type="term" value="F:serine-type endopeptidase activity"/>
    <property type="evidence" value="ECO:0000250"/>
    <property type="project" value="UniProtKB"/>
</dbReference>
<dbReference type="GO" id="GO:0048730">
    <property type="term" value="P:epidermis morphogenesis"/>
    <property type="evidence" value="ECO:0000250"/>
    <property type="project" value="UniProtKB"/>
</dbReference>
<dbReference type="GO" id="GO:0009566">
    <property type="term" value="P:fertilization"/>
    <property type="evidence" value="ECO:0000250"/>
    <property type="project" value="UniProtKB"/>
</dbReference>
<dbReference type="GO" id="GO:0045744">
    <property type="term" value="P:negative regulation of G protein-coupled receptor signaling pathway"/>
    <property type="evidence" value="ECO:0000250"/>
    <property type="project" value="UniProtKB"/>
</dbReference>
<dbReference type="GO" id="GO:0045745">
    <property type="term" value="P:positive regulation of G protein-coupled receptor signaling pathway"/>
    <property type="evidence" value="ECO:0000250"/>
    <property type="project" value="UniProtKB"/>
</dbReference>
<dbReference type="GO" id="GO:0006508">
    <property type="term" value="P:proteolysis"/>
    <property type="evidence" value="ECO:0000250"/>
    <property type="project" value="UniProtKB"/>
</dbReference>
<dbReference type="GO" id="GO:0070684">
    <property type="term" value="P:seminal clot liquefaction"/>
    <property type="evidence" value="ECO:0000250"/>
    <property type="project" value="UniProtKB"/>
</dbReference>
<dbReference type="CDD" id="cd00190">
    <property type="entry name" value="Tryp_SPc"/>
    <property type="match status" value="1"/>
</dbReference>
<dbReference type="FunFam" id="2.40.10.10:FF:000021">
    <property type="entry name" value="Kallikrein 1"/>
    <property type="match status" value="1"/>
</dbReference>
<dbReference type="FunFam" id="2.40.10.10:FF:000010">
    <property type="entry name" value="Kallikrein related peptidase 11"/>
    <property type="match status" value="1"/>
</dbReference>
<dbReference type="Gene3D" id="2.40.10.10">
    <property type="entry name" value="Trypsin-like serine proteases"/>
    <property type="match status" value="2"/>
</dbReference>
<dbReference type="InterPro" id="IPR009003">
    <property type="entry name" value="Peptidase_S1_PA"/>
</dbReference>
<dbReference type="InterPro" id="IPR043504">
    <property type="entry name" value="Peptidase_S1_PA_chymotrypsin"/>
</dbReference>
<dbReference type="InterPro" id="IPR001314">
    <property type="entry name" value="Peptidase_S1A"/>
</dbReference>
<dbReference type="InterPro" id="IPR001254">
    <property type="entry name" value="Trypsin_dom"/>
</dbReference>
<dbReference type="InterPro" id="IPR018114">
    <property type="entry name" value="TRYPSIN_HIS"/>
</dbReference>
<dbReference type="InterPro" id="IPR033116">
    <property type="entry name" value="TRYPSIN_SER"/>
</dbReference>
<dbReference type="PANTHER" id="PTHR24271:SF48">
    <property type="entry name" value="KALLIKREIN-14"/>
    <property type="match status" value="1"/>
</dbReference>
<dbReference type="PANTHER" id="PTHR24271">
    <property type="entry name" value="KALLIKREIN-RELATED"/>
    <property type="match status" value="1"/>
</dbReference>
<dbReference type="Pfam" id="PF00089">
    <property type="entry name" value="Trypsin"/>
    <property type="match status" value="1"/>
</dbReference>
<dbReference type="PRINTS" id="PR00722">
    <property type="entry name" value="CHYMOTRYPSIN"/>
</dbReference>
<dbReference type="SMART" id="SM00020">
    <property type="entry name" value="Tryp_SPc"/>
    <property type="match status" value="1"/>
</dbReference>
<dbReference type="SUPFAM" id="SSF50494">
    <property type="entry name" value="Trypsin-like serine proteases"/>
    <property type="match status" value="1"/>
</dbReference>
<dbReference type="PROSITE" id="PS50240">
    <property type="entry name" value="TRYPSIN_DOM"/>
    <property type="match status" value="1"/>
</dbReference>
<dbReference type="PROSITE" id="PS00134">
    <property type="entry name" value="TRYPSIN_HIS"/>
    <property type="match status" value="1"/>
</dbReference>
<dbReference type="PROSITE" id="PS00135">
    <property type="entry name" value="TRYPSIN_SER"/>
    <property type="match status" value="1"/>
</dbReference>
<organism>
    <name type="scientific">Mus musculus</name>
    <name type="common">Mouse</name>
    <dbReference type="NCBI Taxonomy" id="10090"/>
    <lineage>
        <taxon>Eukaryota</taxon>
        <taxon>Metazoa</taxon>
        <taxon>Chordata</taxon>
        <taxon>Craniata</taxon>
        <taxon>Vertebrata</taxon>
        <taxon>Euteleostomi</taxon>
        <taxon>Mammalia</taxon>
        <taxon>Eutheria</taxon>
        <taxon>Euarchontoglires</taxon>
        <taxon>Glires</taxon>
        <taxon>Rodentia</taxon>
        <taxon>Myomorpha</taxon>
        <taxon>Muroidea</taxon>
        <taxon>Muridae</taxon>
        <taxon>Murinae</taxon>
        <taxon>Mus</taxon>
        <taxon>Mus</taxon>
    </lineage>
</organism>
<gene>
    <name type="primary">Klk14</name>
    <name type="synonym">Gk14</name>
</gene>
<evidence type="ECO:0000250" key="1"/>
<evidence type="ECO:0000255" key="2">
    <source>
        <dbReference type="PROSITE-ProRule" id="PRU00274"/>
    </source>
</evidence>
<reference key="1">
    <citation type="journal article" date="2002" name="Biochem. Biophys. Res. Commun.">
        <title>Organization and evolution of the glandular kallikrein locus in Mus musculus.</title>
        <authorList>
            <person name="Olsson A.Y."/>
            <person name="Lundwall A."/>
        </authorList>
    </citation>
    <scope>NUCLEOTIDE SEQUENCE [GENOMIC DNA]</scope>
</reference>
<reference key="2">
    <citation type="journal article" date="2004" name="Genome Res.">
        <title>The status, quality, and expansion of the NIH full-length cDNA project: the Mammalian Gene Collection (MGC).</title>
        <authorList>
            <consortium name="The MGC Project Team"/>
        </authorList>
    </citation>
    <scope>NUCLEOTIDE SEQUENCE [LARGE SCALE MRNA]</scope>
</reference>
<comment type="function">
    <text evidence="1">Serine-type endopeptidase with a dual trypsin-like and chymotrypsin-like substrate specificity. May activate/inactivate the proteinase-activated receptors F2R, F2RL1 and F2RL3 and other kallikreins including KLK1, KLK3, KLK5 and KLK11. May function in seminal clot liquefaction through direct cleavage of the semenogelin SEMG1 and SEMG2 and activation of KLK3. May function through desmoglein DSG1 cleavage in epidermal desquamation a process by which the most superficial corneocytes are shed from the skin surface. May be involved in several aspects of tumor progression including growth, invasion and angiogenesis (By similarity).</text>
</comment>
<comment type="activity regulation">
    <text evidence="1">Inhibited by SERPINA1, SERPINC1, SERPINE1, SERPINF2, aprotinin, soybean, trypsin inhibitor and leupeptin. Inhibited by serine protease inhibitor SPINK5. Has an autoproteolytic activity which may have a regulatory effect. Activated by citrate and inhibited by zinc and to a lower extent by manganese (By similarity).</text>
</comment>
<comment type="subcellular location">
    <subcellularLocation>
        <location evidence="1">Secreted</location>
        <location evidence="1">Extracellular space</location>
    </subcellularLocation>
</comment>
<comment type="PTM">
    <text evidence="1">Proteolytic cleavage of the activation peptide produces the active enzyme.</text>
</comment>
<comment type="similarity">
    <text evidence="2">Belongs to the peptidase S1 family. Kallikrein subfamily.</text>
</comment>
<protein>
    <recommendedName>
        <fullName>Kallikrein-14</fullName>
        <ecNumber>3.4.21.-</ecNumber>
    </recommendedName>
    <alternativeName>
        <fullName>Glandular kallikrein KLK14</fullName>
        <shortName>mGK14</shortName>
    </alternativeName>
    <alternativeName>
        <fullName>Kallikrein related-peptidase 14</fullName>
    </alternativeName>
</protein>
<proteinExistence type="evidence at transcript level"/>
<accession>Q8CGR5</accession>
<keyword id="KW-1015">Disulfide bond</keyword>
<keyword id="KW-0378">Hydrolase</keyword>
<keyword id="KW-0645">Protease</keyword>
<keyword id="KW-1185">Reference proteome</keyword>
<keyword id="KW-0964">Secreted</keyword>
<keyword id="KW-0720">Serine protease</keyword>
<keyword id="KW-0732">Signal</keyword>
<keyword id="KW-0865">Zymogen</keyword>
<name>KLK14_MOUSE</name>